<organism>
    <name type="scientific">Bat coronavirus 279/2005</name>
    <name type="common">BtCoV</name>
    <name type="synonym">BtCoV/279/2005</name>
    <dbReference type="NCBI Taxonomy" id="389167"/>
    <lineage>
        <taxon>Viruses</taxon>
        <taxon>Riboviria</taxon>
        <taxon>Orthornavirae</taxon>
        <taxon>Pisuviricota</taxon>
        <taxon>Pisoniviricetes</taxon>
        <taxon>Nidovirales</taxon>
        <taxon>Cornidovirineae</taxon>
        <taxon>Coronaviridae</taxon>
        <taxon>Orthocoronavirinae</taxon>
        <taxon>Betacoronavirus</taxon>
        <taxon>Sarbecovirus</taxon>
        <taxon>Severe acute respiratory syndrome coronavirus</taxon>
    </lineage>
</organism>
<proteinExistence type="predicted"/>
<protein>
    <recommendedName>
        <fullName>Non-structural protein 7b</fullName>
        <shortName>ns7b</shortName>
    </recommendedName>
    <alternativeName>
        <fullName>Accessory protein 7b</fullName>
    </alternativeName>
</protein>
<reference key="1">
    <citation type="journal article" date="2006" name="J. Virol.">
        <title>Prevalence and genetic diversity of coronaviruses in bats from China.</title>
        <authorList>
            <person name="Tang X.C."/>
            <person name="Zhang J.X."/>
            <person name="Zhang S.Y."/>
            <person name="Wang P."/>
            <person name="Fan X.H."/>
            <person name="Li L.F."/>
            <person name="Li G."/>
            <person name="Dong B.Q."/>
            <person name="Liu W."/>
            <person name="Cheung C.L."/>
            <person name="Xu K.M."/>
            <person name="Song W.J."/>
            <person name="Vijaykrishna D."/>
            <person name="Poon L.L.M."/>
            <person name="Peiris J.S.M."/>
            <person name="Smith G.J."/>
            <person name="Chen H."/>
            <person name="Guan Y."/>
        </authorList>
    </citation>
    <scope>NUCLEOTIDE SEQUENCE [GENOMIC RNA]</scope>
</reference>
<comment type="subcellular location">
    <subcellularLocation>
        <location evidence="2">Host membrane</location>
        <topology evidence="2">Single-pass membrane protein</topology>
    </subcellularLocation>
</comment>
<comment type="miscellaneous">
    <text>Bat coronavirus 279/2005 is highly similar to SARS-CoV (SARS-like).</text>
</comment>
<evidence type="ECO:0000255" key="1"/>
<evidence type="ECO:0000305" key="2"/>
<sequence>MNELTLIDFYLCFLAFLLFLVLIMLIIFWFSLELQDIEEPCNKV</sequence>
<name>NS7B_BC279</name>
<accession>P0C5A9</accession>
<organismHost>
    <name type="scientific">Rhinolophus macrotis</name>
    <name type="common">Big-eared horseshoe bat</name>
    <dbReference type="NCBI Taxonomy" id="196889"/>
</organismHost>
<feature type="chain" id="PRO_0000296316" description="Non-structural protein 7b">
    <location>
        <begin position="1"/>
        <end position="44"/>
    </location>
</feature>
<feature type="transmembrane region" description="Helical" evidence="1">
    <location>
        <begin position="9"/>
        <end position="29"/>
    </location>
</feature>
<gene>
    <name type="ORF">7b</name>
</gene>
<keyword id="KW-1043">Host membrane</keyword>
<keyword id="KW-0472">Membrane</keyword>
<keyword id="KW-0812">Transmembrane</keyword>
<keyword id="KW-1133">Transmembrane helix</keyword>
<dbReference type="EMBL" id="DQ648857">
    <property type="status" value="NOT_ANNOTATED_CDS"/>
    <property type="molecule type" value="Genomic_RNA"/>
</dbReference>
<dbReference type="SMR" id="P0C5A9"/>
<dbReference type="Proteomes" id="UP000006573">
    <property type="component" value="Genome"/>
</dbReference>
<dbReference type="GO" id="GO:0033644">
    <property type="term" value="C:host cell membrane"/>
    <property type="evidence" value="ECO:0007669"/>
    <property type="project" value="UniProtKB-SubCell"/>
</dbReference>
<dbReference type="GO" id="GO:0016020">
    <property type="term" value="C:membrane"/>
    <property type="evidence" value="ECO:0007669"/>
    <property type="project" value="UniProtKB-KW"/>
</dbReference>
<dbReference type="CDD" id="cd21635">
    <property type="entry name" value="ORF7b_SARS-CoV-like"/>
    <property type="match status" value="1"/>
</dbReference>
<dbReference type="InterPro" id="IPR021532">
    <property type="entry name" value="NS7B_bCoV"/>
</dbReference>
<dbReference type="InterPro" id="IPR044394">
    <property type="entry name" value="ORF7b_SARS-CoV-like"/>
</dbReference>
<dbReference type="Pfam" id="PF11395">
    <property type="entry name" value="bCoV_NS7B"/>
    <property type="match status" value="1"/>
</dbReference>